<organism>
    <name type="scientific">Anopheles gambiae</name>
    <name type="common">African malaria mosquito</name>
    <dbReference type="NCBI Taxonomy" id="7165"/>
    <lineage>
        <taxon>Eukaryota</taxon>
        <taxon>Metazoa</taxon>
        <taxon>Ecdysozoa</taxon>
        <taxon>Arthropoda</taxon>
        <taxon>Hexapoda</taxon>
        <taxon>Insecta</taxon>
        <taxon>Pterygota</taxon>
        <taxon>Neoptera</taxon>
        <taxon>Endopterygota</taxon>
        <taxon>Diptera</taxon>
        <taxon>Nematocera</taxon>
        <taxon>Culicoidea</taxon>
        <taxon>Culicidae</taxon>
        <taxon>Anophelinae</taxon>
        <taxon>Anopheles</taxon>
    </lineage>
</organism>
<feature type="signal peptide" evidence="2">
    <location>
        <begin position="1"/>
        <end position="25"/>
    </location>
</feature>
<feature type="propeptide" id="PRO_0000006738" evidence="2">
    <location>
        <begin position="26"/>
        <end position="62"/>
    </location>
</feature>
<feature type="chain" id="PRO_0000006739" description="Defensin">
    <location>
        <begin position="63"/>
        <end position="102"/>
    </location>
</feature>
<feature type="disulfide bond" evidence="3 4">
    <location>
        <begin position="65"/>
        <end position="92"/>
    </location>
</feature>
<feature type="disulfide bond" evidence="3 4">
    <location>
        <begin position="78"/>
        <end position="98"/>
    </location>
</feature>
<feature type="disulfide bond" evidence="3 4">
    <location>
        <begin position="82"/>
        <end position="100"/>
    </location>
</feature>
<feature type="sequence variant" description="In strain: Gbab1064e, Gbab1068c, Gbab5010bs, Gbab5011f, Gbab5024h, Gbbkj16034a, Gbjo4i, Gbjo8h, Gbjo12g, Gbjo15as, Gbng3334as and Gbng3365b.">
    <original>T</original>
    <variation>A</variation>
    <location>
        <position position="9"/>
    </location>
</feature>
<feature type="sequence variant" description="In strain: Gbab1068c, Gbab5011f and Gbab5024h.">
    <original>A</original>
    <variation>S</variation>
    <location>
        <position position="15"/>
    </location>
</feature>
<feature type="sequence variant" description="In strain: Gbbkj16015a, Gbbkj16024b, Gbbkj16025b, Gbbkj16032b and Gbng3347f.">
    <original>L</original>
    <variation>F</variation>
    <location>
        <position position="18"/>
    </location>
</feature>
<feature type="sequence variant" description="In strain: Gbab1068c, Gbab5010bs, Gbab5011f, Gbab5024h, Gbbkj16015a, Gbbkj16024b, Gbbkj16025b, Gbbkj16032b, Gbbkj16034a, Gbjo4i, Gbjo6e, Gbjo7h, Gbjo8h, Gbjo9a, Gbjo12g, Gbjo14c, Gbjo15as, Gbjo22d, Gbng3336g, Gbng3339b, Gbng3340f and Gbng3347f.">
    <original>S</original>
    <variation>G</variation>
    <location>
        <position position="34"/>
    </location>
</feature>
<feature type="sequence variant" description="In strain: Gbng3343c.">
    <original>AN</original>
    <variation>VS</variation>
    <location>
        <begin position="37"/>
        <end position="38"/>
    </location>
</feature>
<feature type="sequence variant" description="In strain: Gbng3337bs.">
    <original>A</original>
    <variation>G</variation>
    <location>
        <position position="37"/>
    </location>
</feature>
<feature type="sequence variant" description="In strain: Gbab1068c, Gbab5011f, Gbab5024h and Gbng3336g.">
    <original>A</original>
    <variation>V</variation>
    <location>
        <position position="37"/>
    </location>
</feature>
<feature type="sequence variant" description="In strain: Gbjo6e.">
    <original>H</original>
    <variation>L</variation>
    <location>
        <position position="51"/>
    </location>
</feature>
<feature type="sequence variant" description="In strain: Gbng3365b.">
    <original>S</original>
    <variation>R</variation>
    <location>
        <position position="69"/>
    </location>
</feature>
<feature type="sequence variant" description="In strain: KWA.">
    <original>SS</original>
    <variation>NN</variation>
    <location>
        <begin position="75"/>
        <end position="76"/>
    </location>
</feature>
<feature type="sequence variant" description="In strain: Gbjo3a.">
    <original>K</original>
    <variation>R</variation>
    <location>
        <position position="95"/>
    </location>
</feature>
<feature type="strand" evidence="8">
    <location>
        <begin position="68"/>
        <end position="71"/>
    </location>
</feature>
<feature type="helix" evidence="9">
    <location>
        <begin position="74"/>
        <end position="76"/>
    </location>
</feature>
<feature type="strand" evidence="7">
    <location>
        <begin position="77"/>
        <end position="79"/>
    </location>
</feature>
<feature type="helix" evidence="7">
    <location>
        <begin position="80"/>
        <end position="85"/>
    </location>
</feature>
<feature type="strand" evidence="7">
    <location>
        <begin position="90"/>
        <end position="93"/>
    </location>
</feature>
<feature type="strand" evidence="8">
    <location>
        <begin position="94"/>
        <end position="96"/>
    </location>
</feature>
<feature type="strand" evidence="7">
    <location>
        <begin position="97"/>
        <end position="100"/>
    </location>
</feature>
<name>DEFI_ANOGA</name>
<protein>
    <recommendedName>
        <fullName>Defensin</fullName>
    </recommendedName>
</protein>
<reference key="1">
    <citation type="journal article" date="1996" name="Insect Mol. Biol.">
        <title>Inducible immune factors of the vector mosquito Anopheles gambiae: biochemical purification of a defensin antibacterial peptide and molecular cloning of preprodefensin cDNA.</title>
        <authorList>
            <person name="Richman A.M."/>
            <person name="Bulet P."/>
            <person name="Hetru C."/>
            <person name="Barillas-Mury C."/>
            <person name="Hoffmann J.A."/>
            <person name="Kafatos F.C."/>
        </authorList>
    </citation>
    <scope>NUCLEOTIDE SEQUENCE [MRNA]</scope>
    <scope>PROTEIN SEQUENCE OF 63-76</scope>
    <scope>INDUCTION</scope>
    <scope>DEVELOPMENTAL STAGE</scope>
    <source>
        <strain>G3</strain>
    </source>
</reference>
<reference key="2">
    <citation type="journal article" date="2000" name="Insect Mol. Biol.">
        <title>Genomic organization and immune regulation of the defensin gene from the mosquito, Anopheles gambiae.</title>
        <authorList>
            <person name="Eggleston P."/>
            <person name="Lu W."/>
            <person name="Zhao Y."/>
        </authorList>
    </citation>
    <scope>NUCLEOTIDE SEQUENCE [GENOMIC DNA]</scope>
    <source>
        <strain>KWA</strain>
    </source>
</reference>
<reference key="3">
    <citation type="submission" date="2005-09" db="EMBL/GenBank/DDBJ databases">
        <title>Molecular evidence for selection in the Defensin gene within the Anopheles gambiae complex.</title>
        <authorList>
            <person name="Simard F."/>
            <person name="Licht M."/>
            <person name="Lehmann T."/>
        </authorList>
    </citation>
    <scope>NUCLEOTIDE SEQUENCE [GENOMIC DNA]</scope>
    <source>
        <strain>Gbab1062c</strain>
        <strain>Gbab1063g</strain>
        <strain>Gbab1064e</strain>
        <strain>Gbab1068c</strain>
        <strain>Gbab5002a</strain>
        <strain>Gbab5010bs</strain>
        <strain>Gbab5011f</strain>
        <strain>Gbab5020c</strain>
        <strain>Gbab5024h</strain>
        <strain>Gbab5029as</strain>
        <strain>Gbbkj16015a</strain>
        <strain>Gbbkj16024b</strain>
        <strain>Gbbkj16025b</strain>
        <strain>Gbbkj16030c</strain>
        <strain>Gbbkj16032b</strain>
        <strain>Gbbkj16034a</strain>
        <strain>Gbbkj16037a</strain>
        <strain>Gbbkj6a</strain>
        <strain>Gbbkj7a</strain>
        <strain>Gbjo11cs</strain>
        <strain>Gbjo12g</strain>
        <strain>Gbjo14c</strain>
        <strain>Gbjo15as</strain>
        <strain>Gbjo22d</strain>
        <strain>Gbjo3a</strain>
        <strain>Gbjo4i</strain>
        <strain>Gbjo6e</strain>
        <strain>Gbjo7h</strain>
        <strain>Gbjo8h</strain>
        <strain>Gbjo9a</strain>
        <strain>Gbng3334as</strain>
        <strain>Gbng3335ds</strain>
        <strain>Gbng3336g</strain>
        <strain>Gbng3337bs</strain>
        <strain>Gbng3339b</strain>
        <strain>Gbng3340f</strain>
        <strain>Gbng3341as</strain>
        <strain>Gbng3343c</strain>
        <strain>Gbng3347f</strain>
        <strain>Gbng3349a</strain>
        <strain>Gbng3363f</strain>
        <strain>Gbng3365b</strain>
    </source>
</reference>
<reference key="4">
    <citation type="journal article" date="2002" name="Science">
        <title>The genome sequence of the malaria mosquito Anopheles gambiae.</title>
        <authorList>
            <person name="Holt R.A."/>
            <person name="Subramanian G.M."/>
            <person name="Halpern A."/>
            <person name="Sutton G.G."/>
            <person name="Charlab R."/>
            <person name="Nusskern D.R."/>
            <person name="Wincker P."/>
            <person name="Clark A.G."/>
            <person name="Ribeiro J.M.C."/>
            <person name="Wides R."/>
            <person name="Salzberg S.L."/>
            <person name="Loftus B.J."/>
            <person name="Yandell M.D."/>
            <person name="Majoros W.H."/>
            <person name="Rusch D.B."/>
            <person name="Lai Z."/>
            <person name="Kraft C.L."/>
            <person name="Abril J.F."/>
            <person name="Anthouard V."/>
            <person name="Arensburger P."/>
            <person name="Atkinson P.W."/>
            <person name="Baden H."/>
            <person name="de Berardinis V."/>
            <person name="Baldwin D."/>
            <person name="Benes V."/>
            <person name="Biedler J."/>
            <person name="Blass C."/>
            <person name="Bolanos R."/>
            <person name="Boscus D."/>
            <person name="Barnstead M."/>
            <person name="Cai S."/>
            <person name="Center A."/>
            <person name="Chaturverdi K."/>
            <person name="Christophides G.K."/>
            <person name="Chrystal M.A.M."/>
            <person name="Clamp M."/>
            <person name="Cravchik A."/>
            <person name="Curwen V."/>
            <person name="Dana A."/>
            <person name="Delcher A."/>
            <person name="Dew I."/>
            <person name="Evans C.A."/>
            <person name="Flanigan M."/>
            <person name="Grundschober-Freimoser A."/>
            <person name="Friedli L."/>
            <person name="Gu Z."/>
            <person name="Guan P."/>
            <person name="Guigo R."/>
            <person name="Hillenmeyer M.E."/>
            <person name="Hladun S.L."/>
            <person name="Hogan J.R."/>
            <person name="Hong Y.S."/>
            <person name="Hoover J."/>
            <person name="Jaillon O."/>
            <person name="Ke Z."/>
            <person name="Kodira C.D."/>
            <person name="Kokoza E."/>
            <person name="Koutsos A."/>
            <person name="Letunic I."/>
            <person name="Levitsky A.A."/>
            <person name="Liang Y."/>
            <person name="Lin J.-J."/>
            <person name="Lobo N.F."/>
            <person name="Lopez J.R."/>
            <person name="Malek J.A."/>
            <person name="McIntosh T.C."/>
            <person name="Meister S."/>
            <person name="Miller J.R."/>
            <person name="Mobarry C."/>
            <person name="Mongin E."/>
            <person name="Murphy S.D."/>
            <person name="O'Brochta D.A."/>
            <person name="Pfannkoch C."/>
            <person name="Qi R."/>
            <person name="Regier M.A."/>
            <person name="Remington K."/>
            <person name="Shao H."/>
            <person name="Sharakhova M.V."/>
            <person name="Sitter C.D."/>
            <person name="Shetty J."/>
            <person name="Smith T.J."/>
            <person name="Strong R."/>
            <person name="Sun J."/>
            <person name="Thomasova D."/>
            <person name="Ton L.Q."/>
            <person name="Topalis P."/>
            <person name="Tu Z.J."/>
            <person name="Unger M.F."/>
            <person name="Walenz B."/>
            <person name="Wang A.H."/>
            <person name="Wang J."/>
            <person name="Wang M."/>
            <person name="Wang X."/>
            <person name="Woodford K.J."/>
            <person name="Wortman J.R."/>
            <person name="Wu M."/>
            <person name="Yao A."/>
            <person name="Zdobnov E.M."/>
            <person name="Zhang H."/>
            <person name="Zhao Q."/>
            <person name="Zhao S."/>
            <person name="Zhu S.C."/>
            <person name="Zhimulev I."/>
            <person name="Coluzzi M."/>
            <person name="della Torre A."/>
            <person name="Roth C.W."/>
            <person name="Louis C."/>
            <person name="Kalush F."/>
            <person name="Mural R.J."/>
            <person name="Myers E.W."/>
            <person name="Adams M.D."/>
            <person name="Smith H.O."/>
            <person name="Broder S."/>
            <person name="Gardner M.J."/>
            <person name="Fraser C.M."/>
            <person name="Birney E."/>
            <person name="Bork P."/>
            <person name="Brey P.T."/>
            <person name="Venter J.C."/>
            <person name="Weissenbach J."/>
            <person name="Kafatos F.C."/>
            <person name="Collins F.H."/>
            <person name="Hoffman S.L."/>
        </authorList>
    </citation>
    <scope>NUCLEOTIDE SEQUENCE [LARGE SCALE GENOMIC DNA]</scope>
    <source>
        <strain>PEST</strain>
    </source>
</reference>
<reference key="5">
    <citation type="journal article" date="2008" name="Proteins">
        <title>Rational design of peptides active against the gram positive bacteria Staphylococcus aureus.</title>
        <authorList>
            <person name="Landon C."/>
            <person name="Barbault F."/>
            <person name="Legrain M."/>
            <person name="Guenneugues M."/>
            <person name="Vovelle F."/>
        </authorList>
    </citation>
    <scope>STRUCTURE BY NMR OF 63-102</scope>
    <scope>DISULFIDE BONDS</scope>
</reference>
<proteinExistence type="evidence at protein level"/>
<accession>Q17027</accession>
<accession>O61721</accession>
<accession>Q38L95</accession>
<accession>Q38L99</accession>
<accession>Q38LA3</accession>
<accession>Q38LA4</accession>
<accession>Q38LA6</accession>
<accession>Q38LB0</accession>
<accession>Q38LB2</accession>
<accession>Q38LB3</accession>
<accession>Q38LC5</accession>
<accession>Q38LD1</accession>
<accession>Q38LD3</accession>
<accession>Q38LD5</accession>
<accession>Q7QHQ1</accession>
<sequence length="102" mass="10627">MKCATIVCTIAVVLAATLLNGSVQAAPQEEAALSGGANLNTLLDELPEETHHAALENYRAKRATCDLASGFGVGSSLCAAHCIARRYRGGYCNSKAVCVCRN</sequence>
<comment type="function">
    <text evidence="1">Responsible for the anti Gram-positive activity of immune hemolymph.</text>
</comment>
<comment type="subcellular location">
    <subcellularLocation>
        <location>Secreted</location>
    </subcellularLocation>
</comment>
<comment type="developmental stage">
    <text evidence="5">In larvae, transcript is enhanced 4 hours after the bacterial infection, increases up to 12 hours post inoculation and declines by 24 hours and by 30 hours returns to background levels. In adult female, expression is evident by 18 hours after infection. Constitutively expressed in both early and late pupae.</text>
</comment>
<comment type="induction">
    <text evidence="5">By bacterial infection.</text>
</comment>
<comment type="similarity">
    <text evidence="3">Belongs to the invertebrate defensin family. Type 1 subfamily.</text>
</comment>
<comment type="sequence caution" evidence="6">
    <conflict type="erroneous initiation">
        <sequence resource="EMBL-CDS" id="CAA63775"/>
    </conflict>
    <text>Extended N-terminus.</text>
</comment>
<gene>
    <name type="primary">Def1</name>
    <name type="ORF">AGAP011294</name>
</gene>
<evidence type="ECO:0000250" key="1"/>
<evidence type="ECO:0000255" key="2"/>
<evidence type="ECO:0000255" key="3">
    <source>
        <dbReference type="PROSITE-ProRule" id="PRU00710"/>
    </source>
</evidence>
<evidence type="ECO:0000269" key="4">
    <source>
    </source>
</evidence>
<evidence type="ECO:0000269" key="5">
    <source>
    </source>
</evidence>
<evidence type="ECO:0000305" key="6"/>
<evidence type="ECO:0007829" key="7">
    <source>
        <dbReference type="PDB" id="2E3E"/>
    </source>
</evidence>
<evidence type="ECO:0007829" key="8">
    <source>
        <dbReference type="PDB" id="2E3F"/>
    </source>
</evidence>
<evidence type="ECO:0007829" key="9">
    <source>
        <dbReference type="PDB" id="2E3G"/>
    </source>
</evidence>
<dbReference type="EMBL" id="X93562">
    <property type="protein sequence ID" value="CAA63775.1"/>
    <property type="status" value="ALT_INIT"/>
    <property type="molecule type" value="mRNA"/>
</dbReference>
<dbReference type="EMBL" id="AF063402">
    <property type="protein sequence ID" value="AAC18575.1"/>
    <property type="molecule type" value="Genomic_DNA"/>
</dbReference>
<dbReference type="EMBL" id="DQ212001">
    <property type="protein sequence ID" value="ABB00946.1"/>
    <property type="molecule type" value="Genomic_DNA"/>
</dbReference>
<dbReference type="EMBL" id="DQ212002">
    <property type="protein sequence ID" value="ABB00947.1"/>
    <property type="molecule type" value="Genomic_DNA"/>
</dbReference>
<dbReference type="EMBL" id="DQ212003">
    <property type="protein sequence ID" value="ABB00948.1"/>
    <property type="molecule type" value="Genomic_DNA"/>
</dbReference>
<dbReference type="EMBL" id="DQ212004">
    <property type="protein sequence ID" value="ABB00949.1"/>
    <property type="molecule type" value="Genomic_DNA"/>
</dbReference>
<dbReference type="EMBL" id="DQ212005">
    <property type="protein sequence ID" value="ABB00950.1"/>
    <property type="molecule type" value="Genomic_DNA"/>
</dbReference>
<dbReference type="EMBL" id="DQ212006">
    <property type="protein sequence ID" value="ABB00951.1"/>
    <property type="molecule type" value="Genomic_DNA"/>
</dbReference>
<dbReference type="EMBL" id="DQ212007">
    <property type="protein sequence ID" value="ABB00952.1"/>
    <property type="molecule type" value="Genomic_DNA"/>
</dbReference>
<dbReference type="EMBL" id="DQ212008">
    <property type="protein sequence ID" value="ABB00953.1"/>
    <property type="molecule type" value="Genomic_DNA"/>
</dbReference>
<dbReference type="EMBL" id="DQ212009">
    <property type="protein sequence ID" value="ABB00954.1"/>
    <property type="molecule type" value="Genomic_DNA"/>
</dbReference>
<dbReference type="EMBL" id="DQ212010">
    <property type="protein sequence ID" value="ABB00955.1"/>
    <property type="molecule type" value="Genomic_DNA"/>
</dbReference>
<dbReference type="EMBL" id="DQ212011">
    <property type="protein sequence ID" value="ABB00956.1"/>
    <property type="molecule type" value="Genomic_DNA"/>
</dbReference>
<dbReference type="EMBL" id="DQ212012">
    <property type="protein sequence ID" value="ABB00957.1"/>
    <property type="molecule type" value="Genomic_DNA"/>
</dbReference>
<dbReference type="EMBL" id="DQ212013">
    <property type="protein sequence ID" value="ABB00958.1"/>
    <property type="molecule type" value="Genomic_DNA"/>
</dbReference>
<dbReference type="EMBL" id="DQ212014">
    <property type="protein sequence ID" value="ABB00959.1"/>
    <property type="molecule type" value="Genomic_DNA"/>
</dbReference>
<dbReference type="EMBL" id="DQ212015">
    <property type="protein sequence ID" value="ABB00960.1"/>
    <property type="molecule type" value="Genomic_DNA"/>
</dbReference>
<dbReference type="EMBL" id="DQ212016">
    <property type="protein sequence ID" value="ABB00961.1"/>
    <property type="molecule type" value="Genomic_DNA"/>
</dbReference>
<dbReference type="EMBL" id="DQ212017">
    <property type="protein sequence ID" value="ABB00962.1"/>
    <property type="molecule type" value="Genomic_DNA"/>
</dbReference>
<dbReference type="EMBL" id="DQ212018">
    <property type="protein sequence ID" value="ABB00963.1"/>
    <property type="molecule type" value="Genomic_DNA"/>
</dbReference>
<dbReference type="EMBL" id="DQ212019">
    <property type="protein sequence ID" value="ABB00964.1"/>
    <property type="molecule type" value="Genomic_DNA"/>
</dbReference>
<dbReference type="EMBL" id="DQ212020">
    <property type="protein sequence ID" value="ABB00965.1"/>
    <property type="molecule type" value="Genomic_DNA"/>
</dbReference>
<dbReference type="EMBL" id="DQ212021">
    <property type="protein sequence ID" value="ABB00966.1"/>
    <property type="molecule type" value="Genomic_DNA"/>
</dbReference>
<dbReference type="EMBL" id="DQ212022">
    <property type="protein sequence ID" value="ABB00967.1"/>
    <property type="molecule type" value="Genomic_DNA"/>
</dbReference>
<dbReference type="EMBL" id="DQ212023">
    <property type="protein sequence ID" value="ABB00968.1"/>
    <property type="molecule type" value="Genomic_DNA"/>
</dbReference>
<dbReference type="EMBL" id="DQ212024">
    <property type="protein sequence ID" value="ABB00969.1"/>
    <property type="molecule type" value="Genomic_DNA"/>
</dbReference>
<dbReference type="EMBL" id="DQ212025">
    <property type="protein sequence ID" value="ABB00970.1"/>
    <property type="molecule type" value="Genomic_DNA"/>
</dbReference>
<dbReference type="EMBL" id="DQ212026">
    <property type="protein sequence ID" value="ABB00971.1"/>
    <property type="molecule type" value="Genomic_DNA"/>
</dbReference>
<dbReference type="EMBL" id="DQ212027">
    <property type="protein sequence ID" value="ABB00972.1"/>
    <property type="molecule type" value="Genomic_DNA"/>
</dbReference>
<dbReference type="EMBL" id="DQ212028">
    <property type="protein sequence ID" value="ABB00973.1"/>
    <property type="molecule type" value="Genomic_DNA"/>
</dbReference>
<dbReference type="EMBL" id="DQ212029">
    <property type="protein sequence ID" value="ABB00974.1"/>
    <property type="molecule type" value="Genomic_DNA"/>
</dbReference>
<dbReference type="EMBL" id="DQ212030">
    <property type="protein sequence ID" value="ABB00975.1"/>
    <property type="molecule type" value="Genomic_DNA"/>
</dbReference>
<dbReference type="EMBL" id="DQ212031">
    <property type="protein sequence ID" value="ABB00976.1"/>
    <property type="molecule type" value="Genomic_DNA"/>
</dbReference>
<dbReference type="EMBL" id="DQ212032">
    <property type="protein sequence ID" value="ABB00977.1"/>
    <property type="molecule type" value="Genomic_DNA"/>
</dbReference>
<dbReference type="EMBL" id="DQ212033">
    <property type="protein sequence ID" value="ABB00978.1"/>
    <property type="molecule type" value="Genomic_DNA"/>
</dbReference>
<dbReference type="EMBL" id="DQ212034">
    <property type="protein sequence ID" value="ABB00979.1"/>
    <property type="molecule type" value="Genomic_DNA"/>
</dbReference>
<dbReference type="EMBL" id="DQ212035">
    <property type="protein sequence ID" value="ABB00980.1"/>
    <property type="molecule type" value="Genomic_DNA"/>
</dbReference>
<dbReference type="EMBL" id="DQ212036">
    <property type="protein sequence ID" value="ABB00981.1"/>
    <property type="molecule type" value="Genomic_DNA"/>
</dbReference>
<dbReference type="EMBL" id="DQ212037">
    <property type="protein sequence ID" value="ABB00982.1"/>
    <property type="molecule type" value="Genomic_DNA"/>
</dbReference>
<dbReference type="EMBL" id="DQ212038">
    <property type="protein sequence ID" value="ABB00983.1"/>
    <property type="molecule type" value="Genomic_DNA"/>
</dbReference>
<dbReference type="EMBL" id="DQ212039">
    <property type="protein sequence ID" value="ABB00984.1"/>
    <property type="molecule type" value="Genomic_DNA"/>
</dbReference>
<dbReference type="EMBL" id="DQ212040">
    <property type="protein sequence ID" value="ABB00985.1"/>
    <property type="molecule type" value="Genomic_DNA"/>
</dbReference>
<dbReference type="EMBL" id="DQ212041">
    <property type="protein sequence ID" value="ABB00986.1"/>
    <property type="molecule type" value="Genomic_DNA"/>
</dbReference>
<dbReference type="EMBL" id="DQ212042">
    <property type="protein sequence ID" value="ABB00987.1"/>
    <property type="molecule type" value="Genomic_DNA"/>
</dbReference>
<dbReference type="EMBL" id="AAAB01008816">
    <property type="protein sequence ID" value="EAA05234.4"/>
    <property type="molecule type" value="Genomic_DNA"/>
</dbReference>
<dbReference type="RefSeq" id="XP_309352.4">
    <property type="nucleotide sequence ID" value="XM_309352.4"/>
</dbReference>
<dbReference type="PDB" id="2E3E">
    <property type="method" value="NMR"/>
    <property type="chains" value="A=63-102"/>
</dbReference>
<dbReference type="PDB" id="2E3F">
    <property type="method" value="NMR"/>
    <property type="chains" value="A=63-101"/>
</dbReference>
<dbReference type="PDB" id="2E3G">
    <property type="method" value="NMR"/>
    <property type="chains" value="A=63-102"/>
</dbReference>
<dbReference type="PDB" id="2NY8">
    <property type="method" value="NMR"/>
    <property type="chains" value="X=63-102"/>
</dbReference>
<dbReference type="PDB" id="2NY9">
    <property type="method" value="NMR"/>
    <property type="chains" value="X=63-102"/>
</dbReference>
<dbReference type="PDB" id="2NZ3">
    <property type="method" value="NMR"/>
    <property type="chains" value="A=63-102"/>
</dbReference>
<dbReference type="PDBsum" id="2E3E"/>
<dbReference type="PDBsum" id="2E3F"/>
<dbReference type="PDBsum" id="2E3G"/>
<dbReference type="PDBsum" id="2NY8"/>
<dbReference type="PDBsum" id="2NY9"/>
<dbReference type="PDBsum" id="2NZ3"/>
<dbReference type="SMR" id="Q17027"/>
<dbReference type="FunCoup" id="Q17027">
    <property type="interactions" value="71"/>
</dbReference>
<dbReference type="STRING" id="7165.Q17027"/>
<dbReference type="PaxDb" id="7165-AGAP011294-PA"/>
<dbReference type="EnsemblMetazoa" id="AGAP011294-RA">
    <property type="protein sequence ID" value="AGAP011294-PA"/>
    <property type="gene ID" value="AGAP011294"/>
</dbReference>
<dbReference type="GeneID" id="1270637"/>
<dbReference type="KEGG" id="aga:1270637"/>
<dbReference type="VEuPathDB" id="VectorBase:AGAMI1_009154"/>
<dbReference type="VEuPathDB" id="VectorBase:AGAP011294"/>
<dbReference type="eggNOG" id="ENOG502SD3P">
    <property type="taxonomic scope" value="Eukaryota"/>
</dbReference>
<dbReference type="HOGENOM" id="CLU_174272_0_0_1"/>
<dbReference type="InParanoid" id="Q17027"/>
<dbReference type="OMA" id="CATIICA"/>
<dbReference type="PhylomeDB" id="Q17027"/>
<dbReference type="EvolutionaryTrace" id="Q17027"/>
<dbReference type="Proteomes" id="UP000007062">
    <property type="component" value="Chromosome 3L"/>
</dbReference>
<dbReference type="GO" id="GO:0005615">
    <property type="term" value="C:extracellular space"/>
    <property type="evidence" value="ECO:0000318"/>
    <property type="project" value="GO_Central"/>
</dbReference>
<dbReference type="GO" id="GO:0042742">
    <property type="term" value="P:defense response to bacterium"/>
    <property type="evidence" value="ECO:0000318"/>
    <property type="project" value="GO_Central"/>
</dbReference>
<dbReference type="GO" id="GO:0050830">
    <property type="term" value="P:defense response to Gram-positive bacterium"/>
    <property type="evidence" value="ECO:0007669"/>
    <property type="project" value="UniProtKB-ARBA"/>
</dbReference>
<dbReference type="GO" id="GO:0006959">
    <property type="term" value="P:humoral immune response"/>
    <property type="evidence" value="ECO:0000318"/>
    <property type="project" value="GO_Central"/>
</dbReference>
<dbReference type="GO" id="GO:0045087">
    <property type="term" value="P:innate immune response"/>
    <property type="evidence" value="ECO:0007669"/>
    <property type="project" value="UniProtKB-KW"/>
</dbReference>
<dbReference type="CDD" id="cd21806">
    <property type="entry name" value="DEFL_defensin-like"/>
    <property type="match status" value="1"/>
</dbReference>
<dbReference type="FunFam" id="3.30.30.10:FF:000005">
    <property type="entry name" value="Defensin"/>
    <property type="match status" value="1"/>
</dbReference>
<dbReference type="Gene3D" id="3.30.30.10">
    <property type="entry name" value="Knottin, scorpion toxin-like"/>
    <property type="match status" value="1"/>
</dbReference>
<dbReference type="InterPro" id="IPR001542">
    <property type="entry name" value="Defensin_invertebrate/fungal"/>
</dbReference>
<dbReference type="InterPro" id="IPR036574">
    <property type="entry name" value="Scorpion_toxin-like_sf"/>
</dbReference>
<dbReference type="PANTHER" id="PTHR13645">
    <property type="entry name" value="DEFENSIN"/>
    <property type="match status" value="1"/>
</dbReference>
<dbReference type="PANTHER" id="PTHR13645:SF0">
    <property type="entry name" value="DEFENSIN"/>
    <property type="match status" value="1"/>
</dbReference>
<dbReference type="Pfam" id="PF01097">
    <property type="entry name" value="Defensin_2"/>
    <property type="match status" value="1"/>
</dbReference>
<dbReference type="SUPFAM" id="SSF57095">
    <property type="entry name" value="Scorpion toxin-like"/>
    <property type="match status" value="1"/>
</dbReference>
<dbReference type="PROSITE" id="PS51378">
    <property type="entry name" value="INVERT_DEFENSINS"/>
    <property type="match status" value="1"/>
</dbReference>
<keyword id="KW-0002">3D-structure</keyword>
<keyword id="KW-0044">Antibiotic</keyword>
<keyword id="KW-0929">Antimicrobial</keyword>
<keyword id="KW-0165">Cleavage on pair of basic residues</keyword>
<keyword id="KW-0211">Defensin</keyword>
<keyword id="KW-0903">Direct protein sequencing</keyword>
<keyword id="KW-1015">Disulfide bond</keyword>
<keyword id="KW-0391">Immunity</keyword>
<keyword id="KW-0399">Innate immunity</keyword>
<keyword id="KW-1185">Reference proteome</keyword>
<keyword id="KW-0964">Secreted</keyword>
<keyword id="KW-0732">Signal</keyword>